<name>MPK4A_PHYPA</name>
<protein>
    <recommendedName>
        <fullName evidence="5">Mitogen-activated protein kinase 4a</fullName>
        <ecNumber evidence="1 2 3 4">2.7.11.24</ecNumber>
    </recommendedName>
    <alternativeName>
        <fullName evidence="5">MAP kinase 4a</fullName>
        <shortName evidence="5">PpMPK4a</shortName>
    </alternativeName>
</protein>
<accession>A9T142</accession>
<feature type="chain" id="PRO_0000443378" description="Mitogen-activated protein kinase 4a">
    <location>
        <begin position="1"/>
        <end position="375"/>
    </location>
</feature>
<feature type="domain" description="Protein kinase" evidence="2">
    <location>
        <begin position="39"/>
        <end position="325"/>
    </location>
</feature>
<feature type="short sequence motif" description="TXY" evidence="6">
    <location>
        <begin position="197"/>
        <end position="199"/>
    </location>
</feature>
<feature type="active site" description="Proton acceptor" evidence="2">
    <location>
        <position position="165"/>
    </location>
</feature>
<feature type="binding site" evidence="2">
    <location>
        <begin position="45"/>
        <end position="53"/>
    </location>
    <ligand>
        <name>ATP</name>
        <dbReference type="ChEBI" id="CHEBI:30616"/>
    </ligand>
</feature>
<feature type="binding site" evidence="2">
    <location>
        <position position="68"/>
    </location>
    <ligand>
        <name>ATP</name>
        <dbReference type="ChEBI" id="CHEBI:30616"/>
    </ligand>
</feature>
<feature type="modified residue" description="Phosphothreonine" evidence="4">
    <location>
        <position position="197"/>
    </location>
</feature>
<feature type="modified residue" description="Phosphotyrosine" evidence="4">
    <location>
        <position position="199"/>
    </location>
</feature>
<comment type="function">
    <text evidence="4">The CERK1, MEKK1a/b, MKK1a/b/c and MPK4a/b proteins are involved in pathogen defense. The pathway induces rapid growth inhibition, cell wall depositions and accumulation of defense-related transcripts. This protein is required for innate immunity triggered by pathogen-associated molecular patterns (PAMPs). Involved in resistance to necrotrophic fungi B.cinerea and A.brassicicola. Involved in the transduction of signals from chitosan perception to the activation of defense genes.</text>
</comment>
<comment type="catalytic activity">
    <reaction evidence="3 4">
        <text>L-seryl-[protein] + ATP = O-phospho-L-seryl-[protein] + ADP + H(+)</text>
        <dbReference type="Rhea" id="RHEA:17989"/>
        <dbReference type="Rhea" id="RHEA-COMP:9863"/>
        <dbReference type="Rhea" id="RHEA-COMP:11604"/>
        <dbReference type="ChEBI" id="CHEBI:15378"/>
        <dbReference type="ChEBI" id="CHEBI:29999"/>
        <dbReference type="ChEBI" id="CHEBI:30616"/>
        <dbReference type="ChEBI" id="CHEBI:83421"/>
        <dbReference type="ChEBI" id="CHEBI:456216"/>
        <dbReference type="EC" id="2.7.11.24"/>
    </reaction>
</comment>
<comment type="catalytic activity">
    <reaction evidence="3 4">
        <text>L-threonyl-[protein] + ATP = O-phospho-L-threonyl-[protein] + ADP + H(+)</text>
        <dbReference type="Rhea" id="RHEA:46608"/>
        <dbReference type="Rhea" id="RHEA-COMP:11060"/>
        <dbReference type="Rhea" id="RHEA-COMP:11605"/>
        <dbReference type="ChEBI" id="CHEBI:15378"/>
        <dbReference type="ChEBI" id="CHEBI:30013"/>
        <dbReference type="ChEBI" id="CHEBI:30616"/>
        <dbReference type="ChEBI" id="CHEBI:61977"/>
        <dbReference type="ChEBI" id="CHEBI:456216"/>
        <dbReference type="EC" id="2.7.11.24"/>
    </reaction>
</comment>
<comment type="cofactor">
    <cofactor evidence="3">
        <name>Mg(2+)</name>
        <dbReference type="ChEBI" id="CHEBI:18420"/>
    </cofactor>
</comment>
<comment type="activity regulation">
    <text evidence="4">Activated by threonine and tyrosine phosphorylation. Activated in response to bacterial and fungal pathogen-associated molecular patterns (PAMPs) including chitin, chitosan and peptidyl glycans (PGNs). Activation in response to chitin requires the CERK1, MEKK1a/b, MKK1a/b/c and MPK4a/b signaling pathway. Activated in response to necrotrophic fungus B.cinerea spores. Not activated in response to osmotic stress.</text>
</comment>
<comment type="subcellular location">
    <subcellularLocation>
        <location evidence="4">Cytoplasm</location>
    </subcellularLocation>
    <subcellularLocation>
        <location evidence="4">Nucleus</location>
    </subcellularLocation>
    <text evidence="4">Localization to the cytoplasm and nucleus does not change significantly following chitin treatment.</text>
</comment>
<comment type="tissue specificity">
    <text evidence="4">Expressed strongly in the apical cells of caulonemal air filaments and rhizoids in fully developed plants and less strongly, but readily detectable in filamentous protonemal tissue at the edge of the plant consisting of both chloronema and caulonema. When filamentous growth of protonema is promoted, the expression is strongest in newly formed apical tip cells of protonemal tissue.</text>
</comment>
<comment type="induction">
    <text evidence="4">Up-regulated in response to chitosan within 15 minutes, peaks 8-fold at 2 h, and returns to basal levels by 8 h.</text>
</comment>
<comment type="domain">
    <text evidence="6">The TXY motif contains the threonine and tyrosine residues whose phosphorylation activates the MAP kinases.</text>
</comment>
<comment type="PTM">
    <text evidence="4">Dually phosphorylated on Thr-197 and Tyr-199, which activates the enzyme. Phosphorylated in response to pathogen-associated molecular pattern (PAMP) chitin and in response to necrotrophic fungus B.cinerea spores. Not phosphorylated in response to osmotic stress.</text>
</comment>
<comment type="disruption phenotype">
    <text evidence="4">Significantly reduced chitin-induced cell wall-associated depositions. Reduced accumulation of PAL4, CHS, ERF2, alpha-DOX and LOX7 transcripts in response to chitin or chitosan. Susceptible to necrotrophic fungus B.cinerea, characterized by the symptoms of browning protonema and stems becoming visible 2 days after the infection leading to host cell death. Reactive oxygen species (ROS) production is detected in infected tissues, and phenolic compounds are incorporated in cell walls in contact with B.cinerea hyphae, especially around the point of hyphal penetration, but there are no clear differences compared to wild-type. Susceptible also to necrotrophic fungus A.brassicicola characterized by the production of significantly more spores 4 days after the infection compared to wild-type. Transcript levels of SnRK2 proteins respond similarly to wild-type in response to NaCl treatment.</text>
</comment>
<comment type="similarity">
    <text evidence="6">Belongs to the protein kinase superfamily. CMGC Ser/Thr protein kinase family. MAP kinase subfamily.</text>
</comment>
<sequence>METSSGTPELKVISTPTYGGHYVKYVVAGTDFEVTARYKPPLRPIGRGAYGIVCSLFDTVTGEEVAVKKIGNAFDNRIDAKRTLREIKLLRHMDHENVVAITDIIRPPTRENFNDVYIVYELMDTDLHQIIRSNQALTEDHCQYFLYQILRGLKYIHSANVLHRDLKPTNLLVNANCDLKIADFGLARTLSETDFMTEYVVTRWYRAPELLLNCSAYTAAIDIWSVGCIFMELLNRSALFPGRDYVHQLRLITELIGTPEDRDLGFLRSDNARRYIKHLPRQSPIPLTQKFRGINRSALDLVEKMLVFDPAKRITVEAALAHPYLASLHDINDEPASVSPFEFDFEEPSISEEHIKDLIWREALDCSLGPDDMVQ</sequence>
<gene>
    <name type="primary">MPK4a</name>
    <name evidence="7" type="ORF">PHYPADRAFT_217865</name>
</gene>
<reference key="1">
    <citation type="journal article" date="2016" name="Plant Cell">
        <title>An innate immunity pathway in the Moss Physcomitrella patens.</title>
        <authorList>
            <person name="Bressendorff S."/>
            <person name="Azevedo R."/>
            <person name="Kenchappa C.S."/>
            <person name="Ponce de Leon I."/>
            <person name="Olsen J.V."/>
            <person name="Rasmussen M.W."/>
            <person name="Erbs G."/>
            <person name="Newman M.A."/>
            <person name="Petersen M."/>
            <person name="Mundy J."/>
        </authorList>
    </citation>
    <scope>NUCLEOTIDE SEQUENCE [GENOMIC DNA]</scope>
    <scope>FUNCTION</scope>
    <scope>CATALYTIC ACTIVITY</scope>
    <scope>ACTIVITY REGULATION</scope>
    <scope>SUBCELLULAR LOCATION</scope>
    <scope>TISSUE SPECIFICITY</scope>
    <scope>INDUCTION</scope>
    <scope>PHOSPHORYLATION AT THR-197 AND TYR-199</scope>
    <scope>DISRUPTION PHENOTYPE</scope>
    <source>
        <strain evidence="5">cv. Gransden 2004</strain>
    </source>
</reference>
<reference evidence="7" key="2">
    <citation type="journal article" date="2008" name="Science">
        <title>The Physcomitrella genome reveals evolutionary insights into the conquest of land by plants.</title>
        <authorList>
            <person name="Rensing S.A."/>
            <person name="Lang D."/>
            <person name="Zimmer A.D."/>
            <person name="Terry A."/>
            <person name="Salamov A."/>
            <person name="Shapiro H."/>
            <person name="Nishiyama T."/>
            <person name="Perroud P.-F."/>
            <person name="Lindquist E.A."/>
            <person name="Kamisugi Y."/>
            <person name="Tanahashi T."/>
            <person name="Sakakibara K."/>
            <person name="Fujita T."/>
            <person name="Oishi K."/>
            <person name="Shin-I T."/>
            <person name="Kuroki Y."/>
            <person name="Toyoda A."/>
            <person name="Suzuki Y."/>
            <person name="Hashimoto S.-I."/>
            <person name="Yamaguchi K."/>
            <person name="Sugano S."/>
            <person name="Kohara Y."/>
            <person name="Fujiyama A."/>
            <person name="Anterola A."/>
            <person name="Aoki S."/>
            <person name="Ashton N."/>
            <person name="Barbazuk W.B."/>
            <person name="Barker E."/>
            <person name="Bennetzen J.L."/>
            <person name="Blankenship R."/>
            <person name="Cho S.H."/>
            <person name="Dutcher S.K."/>
            <person name="Estelle M."/>
            <person name="Fawcett J.A."/>
            <person name="Gundlach H."/>
            <person name="Hanada K."/>
            <person name="Heyl A."/>
            <person name="Hicks K.A."/>
            <person name="Hughes J."/>
            <person name="Lohr M."/>
            <person name="Mayer K."/>
            <person name="Melkozernov A."/>
            <person name="Murata T."/>
            <person name="Nelson D.R."/>
            <person name="Pils B."/>
            <person name="Prigge M."/>
            <person name="Reiss B."/>
            <person name="Renner T."/>
            <person name="Rombauts S."/>
            <person name="Rushton P.J."/>
            <person name="Sanderfoot A."/>
            <person name="Schween G."/>
            <person name="Shiu S.-H."/>
            <person name="Stueber K."/>
            <person name="Theodoulou F.L."/>
            <person name="Tu H."/>
            <person name="Van de Peer Y."/>
            <person name="Verrier P.J."/>
            <person name="Waters E."/>
            <person name="Wood A."/>
            <person name="Yang L."/>
            <person name="Cove D."/>
            <person name="Cuming A.C."/>
            <person name="Hasebe M."/>
            <person name="Lucas S."/>
            <person name="Mishler B.D."/>
            <person name="Reski R."/>
            <person name="Grigoriev I.V."/>
            <person name="Quatrano R.S."/>
            <person name="Boore J.L."/>
        </authorList>
    </citation>
    <scope>NUCLEOTIDE SEQUENCE [LARGE SCALE GENOMIC DNA]</scope>
    <source>
        <strain>cv. Gransden 2004</strain>
    </source>
</reference>
<proteinExistence type="evidence at protein level"/>
<dbReference type="EC" id="2.7.11.24" evidence="1 2 3 4"/>
<dbReference type="EMBL" id="DS545038">
    <property type="protein sequence ID" value="EDQ62847.1"/>
    <property type="molecule type" value="Genomic_DNA"/>
</dbReference>
<dbReference type="RefSeq" id="XP_001772376.1">
    <property type="nucleotide sequence ID" value="XM_001772324.1"/>
</dbReference>
<dbReference type="SMR" id="A9T142"/>
<dbReference type="iPTMnet" id="A9T142"/>
<dbReference type="PaxDb" id="3218-PP1S149_39V6.3"/>
<dbReference type="EnsemblPlants" id="Pp3c26_400V3.1">
    <property type="protein sequence ID" value="Pp3c26_400V3.1"/>
    <property type="gene ID" value="Pp3c26_400"/>
</dbReference>
<dbReference type="EnsemblPlants" id="Pp3c26_400V3.2">
    <property type="protein sequence ID" value="Pp3c26_400V3.2"/>
    <property type="gene ID" value="Pp3c26_400"/>
</dbReference>
<dbReference type="Gramene" id="Pp3c26_400V3.1">
    <property type="protein sequence ID" value="Pp3c26_400V3.1"/>
    <property type="gene ID" value="Pp3c26_400"/>
</dbReference>
<dbReference type="Gramene" id="Pp3c26_400V3.2">
    <property type="protein sequence ID" value="Pp3c26_400V3.2"/>
    <property type="gene ID" value="Pp3c26_400"/>
</dbReference>
<dbReference type="eggNOG" id="KOG0660">
    <property type="taxonomic scope" value="Eukaryota"/>
</dbReference>
<dbReference type="HOGENOM" id="CLU_000288_181_1_1"/>
<dbReference type="InParanoid" id="A9T142"/>
<dbReference type="OrthoDB" id="192887at2759"/>
<dbReference type="Proteomes" id="UP000006727">
    <property type="component" value="Chromosome 26"/>
</dbReference>
<dbReference type="GO" id="GO:0005737">
    <property type="term" value="C:cytoplasm"/>
    <property type="evidence" value="ECO:0000314"/>
    <property type="project" value="UniProtKB"/>
</dbReference>
<dbReference type="GO" id="GO:0005634">
    <property type="term" value="C:nucleus"/>
    <property type="evidence" value="ECO:0000314"/>
    <property type="project" value="UniProtKB"/>
</dbReference>
<dbReference type="GO" id="GO:0005524">
    <property type="term" value="F:ATP binding"/>
    <property type="evidence" value="ECO:0007669"/>
    <property type="project" value="UniProtKB-KW"/>
</dbReference>
<dbReference type="GO" id="GO:0004707">
    <property type="term" value="F:MAP kinase activity"/>
    <property type="evidence" value="ECO:0000314"/>
    <property type="project" value="UniProtKB"/>
</dbReference>
<dbReference type="GO" id="GO:0106310">
    <property type="term" value="F:protein serine kinase activity"/>
    <property type="evidence" value="ECO:0007669"/>
    <property type="project" value="RHEA"/>
</dbReference>
<dbReference type="GO" id="GO:0004674">
    <property type="term" value="F:protein serine/threonine kinase activity"/>
    <property type="evidence" value="ECO:0000318"/>
    <property type="project" value="GO_Central"/>
</dbReference>
<dbReference type="GO" id="GO:0045087">
    <property type="term" value="P:innate immune response"/>
    <property type="evidence" value="ECO:0007669"/>
    <property type="project" value="UniProtKB-KW"/>
</dbReference>
<dbReference type="GO" id="GO:0035556">
    <property type="term" value="P:intracellular signal transduction"/>
    <property type="evidence" value="ECO:0000318"/>
    <property type="project" value="GO_Central"/>
</dbReference>
<dbReference type="GO" id="GO:0002221">
    <property type="term" value="P:pattern recognition receptor signaling pathway"/>
    <property type="evidence" value="ECO:0000314"/>
    <property type="project" value="UniProtKB"/>
</dbReference>
<dbReference type="GO" id="GO:0010468">
    <property type="term" value="P:regulation of gene expression"/>
    <property type="evidence" value="ECO:0000315"/>
    <property type="project" value="UniProtKB"/>
</dbReference>
<dbReference type="FunFam" id="1.10.510.10:FF:000013">
    <property type="entry name" value="Mitogen-activated protein kinase"/>
    <property type="match status" value="1"/>
</dbReference>
<dbReference type="FunFam" id="3.30.200.20:FF:000046">
    <property type="entry name" value="Mitogen-activated protein kinase"/>
    <property type="match status" value="1"/>
</dbReference>
<dbReference type="Gene3D" id="3.30.200.20">
    <property type="entry name" value="Phosphorylase Kinase, domain 1"/>
    <property type="match status" value="1"/>
</dbReference>
<dbReference type="Gene3D" id="1.10.510.10">
    <property type="entry name" value="Transferase(Phosphotransferase) domain 1"/>
    <property type="match status" value="1"/>
</dbReference>
<dbReference type="InterPro" id="IPR011009">
    <property type="entry name" value="Kinase-like_dom_sf"/>
</dbReference>
<dbReference type="InterPro" id="IPR050117">
    <property type="entry name" value="MAP_kinase"/>
</dbReference>
<dbReference type="InterPro" id="IPR003527">
    <property type="entry name" value="MAP_kinase_CS"/>
</dbReference>
<dbReference type="InterPro" id="IPR000719">
    <property type="entry name" value="Prot_kinase_dom"/>
</dbReference>
<dbReference type="InterPro" id="IPR017441">
    <property type="entry name" value="Protein_kinase_ATP_BS"/>
</dbReference>
<dbReference type="InterPro" id="IPR008271">
    <property type="entry name" value="Ser/Thr_kinase_AS"/>
</dbReference>
<dbReference type="PANTHER" id="PTHR24055">
    <property type="entry name" value="MITOGEN-ACTIVATED PROTEIN KINASE"/>
    <property type="match status" value="1"/>
</dbReference>
<dbReference type="Pfam" id="PF00069">
    <property type="entry name" value="Pkinase"/>
    <property type="match status" value="1"/>
</dbReference>
<dbReference type="SMART" id="SM00220">
    <property type="entry name" value="S_TKc"/>
    <property type="match status" value="1"/>
</dbReference>
<dbReference type="SUPFAM" id="SSF56112">
    <property type="entry name" value="Protein kinase-like (PK-like)"/>
    <property type="match status" value="1"/>
</dbReference>
<dbReference type="PROSITE" id="PS01351">
    <property type="entry name" value="MAPK"/>
    <property type="match status" value="1"/>
</dbReference>
<dbReference type="PROSITE" id="PS00107">
    <property type="entry name" value="PROTEIN_KINASE_ATP"/>
    <property type="match status" value="1"/>
</dbReference>
<dbReference type="PROSITE" id="PS50011">
    <property type="entry name" value="PROTEIN_KINASE_DOM"/>
    <property type="match status" value="1"/>
</dbReference>
<dbReference type="PROSITE" id="PS00108">
    <property type="entry name" value="PROTEIN_KINASE_ST"/>
    <property type="match status" value="1"/>
</dbReference>
<organism>
    <name type="scientific">Physcomitrium patens</name>
    <name type="common">Spreading-leaved earth moss</name>
    <name type="synonym">Physcomitrella patens</name>
    <dbReference type="NCBI Taxonomy" id="3218"/>
    <lineage>
        <taxon>Eukaryota</taxon>
        <taxon>Viridiplantae</taxon>
        <taxon>Streptophyta</taxon>
        <taxon>Embryophyta</taxon>
        <taxon>Bryophyta</taxon>
        <taxon>Bryophytina</taxon>
        <taxon>Bryopsida</taxon>
        <taxon>Funariidae</taxon>
        <taxon>Funariales</taxon>
        <taxon>Funariaceae</taxon>
        <taxon>Physcomitrium</taxon>
    </lineage>
</organism>
<evidence type="ECO:0000255" key="1"/>
<evidence type="ECO:0000255" key="2">
    <source>
        <dbReference type="PROSITE-ProRule" id="PRU00159"/>
    </source>
</evidence>
<evidence type="ECO:0000255" key="3">
    <source>
        <dbReference type="RuleBase" id="RU361165"/>
    </source>
</evidence>
<evidence type="ECO:0000269" key="4">
    <source>
    </source>
</evidence>
<evidence type="ECO:0000303" key="5">
    <source>
    </source>
</evidence>
<evidence type="ECO:0000305" key="6"/>
<evidence type="ECO:0000312" key="7">
    <source>
        <dbReference type="EMBL" id="EDQ62847.1"/>
    </source>
</evidence>
<keyword id="KW-0067">ATP-binding</keyword>
<keyword id="KW-0963">Cytoplasm</keyword>
<keyword id="KW-0391">Immunity</keyword>
<keyword id="KW-0399">Innate immunity</keyword>
<keyword id="KW-0418">Kinase</keyword>
<keyword id="KW-0460">Magnesium</keyword>
<keyword id="KW-0547">Nucleotide-binding</keyword>
<keyword id="KW-0539">Nucleus</keyword>
<keyword id="KW-0597">Phosphoprotein</keyword>
<keyword id="KW-0611">Plant defense</keyword>
<keyword id="KW-1185">Reference proteome</keyword>
<keyword id="KW-0723">Serine/threonine-protein kinase</keyword>
<keyword id="KW-0808">Transferase</keyword>